<proteinExistence type="evidence at transcript level"/>
<organism>
    <name type="scientific">Anthoceros angustus</name>
    <name type="common">Hornwort</name>
    <name type="synonym">Anthoceros formosae</name>
    <dbReference type="NCBI Taxonomy" id="48387"/>
    <lineage>
        <taxon>Eukaryota</taxon>
        <taxon>Viridiplantae</taxon>
        <taxon>Streptophyta</taxon>
        <taxon>Embryophyta</taxon>
        <taxon>Anthocerotophyta</taxon>
        <taxon>Anthocerotopsida</taxon>
        <taxon>Anthocerotidae</taxon>
        <taxon>Anthocerotales</taxon>
        <taxon>Anthocerotaceae</taxon>
        <taxon>Anthoceros</taxon>
    </lineage>
</organism>
<protein>
    <recommendedName>
        <fullName evidence="1">NAD(P)H-quinone oxidoreductase subunit 1, chloroplastic</fullName>
        <ecNumber evidence="1">7.1.1.-</ecNumber>
    </recommendedName>
    <alternativeName>
        <fullName evidence="1">NAD(P)H dehydrogenase subunit 1</fullName>
        <shortName evidence="1">NDH subunit 1</shortName>
    </alternativeName>
    <alternativeName>
        <fullName evidence="1">NADH-plastoquinone oxidoreductase subunit 1</fullName>
    </alternativeName>
</protein>
<gene>
    <name evidence="1" type="primary">ndhA</name>
</gene>
<dbReference type="EC" id="7.1.1.-" evidence="1"/>
<dbReference type="EMBL" id="AB086179">
    <property type="protein sequence ID" value="BAC55406.1"/>
    <property type="molecule type" value="Genomic_DNA"/>
</dbReference>
<dbReference type="EMBL" id="AB087489">
    <property type="protein sequence ID" value="BAC55506.1"/>
    <property type="molecule type" value="mRNA"/>
</dbReference>
<dbReference type="RefSeq" id="NP_777469.1">
    <property type="nucleotide sequence ID" value="NC_004543.1"/>
</dbReference>
<dbReference type="SMR" id="Q85BI5"/>
<dbReference type="GeneID" id="2553493"/>
<dbReference type="GO" id="GO:0009535">
    <property type="term" value="C:chloroplast thylakoid membrane"/>
    <property type="evidence" value="ECO:0007669"/>
    <property type="project" value="UniProtKB-SubCell"/>
</dbReference>
<dbReference type="GO" id="GO:0003954">
    <property type="term" value="F:NADH dehydrogenase activity"/>
    <property type="evidence" value="ECO:0007669"/>
    <property type="project" value="TreeGrafter"/>
</dbReference>
<dbReference type="GO" id="GO:0016655">
    <property type="term" value="F:oxidoreductase activity, acting on NAD(P)H, quinone or similar compound as acceptor"/>
    <property type="evidence" value="ECO:0007669"/>
    <property type="project" value="UniProtKB-UniRule"/>
</dbReference>
<dbReference type="GO" id="GO:0048038">
    <property type="term" value="F:quinone binding"/>
    <property type="evidence" value="ECO:0007669"/>
    <property type="project" value="UniProtKB-KW"/>
</dbReference>
<dbReference type="GO" id="GO:0009060">
    <property type="term" value="P:aerobic respiration"/>
    <property type="evidence" value="ECO:0007669"/>
    <property type="project" value="TreeGrafter"/>
</dbReference>
<dbReference type="GO" id="GO:0019684">
    <property type="term" value="P:photosynthesis, light reaction"/>
    <property type="evidence" value="ECO:0007669"/>
    <property type="project" value="UniProtKB-UniRule"/>
</dbReference>
<dbReference type="HAMAP" id="MF_01350">
    <property type="entry name" value="NDH1_NuoH"/>
    <property type="match status" value="1"/>
</dbReference>
<dbReference type="InterPro" id="IPR001694">
    <property type="entry name" value="NADH_UbQ_OxRdtase_su1/FPO"/>
</dbReference>
<dbReference type="InterPro" id="IPR018086">
    <property type="entry name" value="NADH_UbQ_OxRdtase_su1_CS"/>
</dbReference>
<dbReference type="NCBIfam" id="NF004741">
    <property type="entry name" value="PRK06076.1-2"/>
    <property type="match status" value="1"/>
</dbReference>
<dbReference type="NCBIfam" id="NF004744">
    <property type="entry name" value="PRK06076.1-5"/>
    <property type="match status" value="1"/>
</dbReference>
<dbReference type="PANTHER" id="PTHR11432">
    <property type="entry name" value="NADH DEHYDROGENASE SUBUNIT 1"/>
    <property type="match status" value="1"/>
</dbReference>
<dbReference type="PANTHER" id="PTHR11432:SF3">
    <property type="entry name" value="NADH-UBIQUINONE OXIDOREDUCTASE CHAIN 1"/>
    <property type="match status" value="1"/>
</dbReference>
<dbReference type="Pfam" id="PF00146">
    <property type="entry name" value="NADHdh"/>
    <property type="match status" value="1"/>
</dbReference>
<dbReference type="PROSITE" id="PS00667">
    <property type="entry name" value="COMPLEX1_ND1_1"/>
    <property type="match status" value="1"/>
</dbReference>
<dbReference type="PROSITE" id="PS00668">
    <property type="entry name" value="COMPLEX1_ND1_2"/>
    <property type="match status" value="1"/>
</dbReference>
<name>NU1C_ANTAG</name>
<reference key="1">
    <citation type="journal article" date="2003" name="Nucleic Acids Res.">
        <title>The complete nucleotide sequence of the hornwort (Anthoceros formosae) chloroplast genome: insight into the earliest land plants.</title>
        <authorList>
            <person name="Kugita M."/>
            <person name="Kaneko A."/>
            <person name="Yamamoto Y."/>
            <person name="Takeya Y."/>
            <person name="Matsumoto T."/>
            <person name="Yoshinaga K."/>
        </authorList>
    </citation>
    <scope>NUCLEOTIDE SEQUENCE [LARGE SCALE GENOMIC DNA]</scope>
    <scope>RNA EDITING</scope>
</reference>
<reference key="2">
    <citation type="journal article" date="2003" name="Nucleic Acids Res.">
        <title>RNA editing in hornwort chloroplasts makes more than half the genes functional.</title>
        <authorList>
            <person name="Kugita M."/>
            <person name="Yamamoto Y."/>
            <person name="Fujikawa T."/>
            <person name="Matsumoto T."/>
            <person name="Yoshinaga K."/>
        </authorList>
    </citation>
    <scope>NUCLEOTIDE SEQUENCE [MRNA]</scope>
    <scope>RNA EDITING</scope>
    <source>
        <tissue>Thallus</tissue>
    </source>
</reference>
<comment type="function">
    <text evidence="1">NDH shuttles electrons from NAD(P)H:plastoquinone, via FMN and iron-sulfur (Fe-S) centers, to quinones in the photosynthetic chain and possibly in a chloroplast respiratory chain. The immediate electron acceptor for the enzyme in this species is believed to be plastoquinone. Couples the redox reaction to proton translocation, and thus conserves the redox energy in a proton gradient.</text>
</comment>
<comment type="catalytic activity">
    <reaction evidence="1">
        <text>a plastoquinone + NADH + (n+1) H(+)(in) = a plastoquinol + NAD(+) + n H(+)(out)</text>
        <dbReference type="Rhea" id="RHEA:42608"/>
        <dbReference type="Rhea" id="RHEA-COMP:9561"/>
        <dbReference type="Rhea" id="RHEA-COMP:9562"/>
        <dbReference type="ChEBI" id="CHEBI:15378"/>
        <dbReference type="ChEBI" id="CHEBI:17757"/>
        <dbReference type="ChEBI" id="CHEBI:57540"/>
        <dbReference type="ChEBI" id="CHEBI:57945"/>
        <dbReference type="ChEBI" id="CHEBI:62192"/>
    </reaction>
</comment>
<comment type="catalytic activity">
    <reaction evidence="1">
        <text>a plastoquinone + NADPH + (n+1) H(+)(in) = a plastoquinol + NADP(+) + n H(+)(out)</text>
        <dbReference type="Rhea" id="RHEA:42612"/>
        <dbReference type="Rhea" id="RHEA-COMP:9561"/>
        <dbReference type="Rhea" id="RHEA-COMP:9562"/>
        <dbReference type="ChEBI" id="CHEBI:15378"/>
        <dbReference type="ChEBI" id="CHEBI:17757"/>
        <dbReference type="ChEBI" id="CHEBI:57783"/>
        <dbReference type="ChEBI" id="CHEBI:58349"/>
        <dbReference type="ChEBI" id="CHEBI:62192"/>
    </reaction>
</comment>
<comment type="subunit">
    <text evidence="1">NDH is composed of at least 16 different subunits, 5 of which are encoded in the nucleus.</text>
</comment>
<comment type="subcellular location">
    <subcellularLocation>
        <location evidence="1">Plastid</location>
        <location evidence="1">Chloroplast thylakoid membrane</location>
        <topology evidence="1">Multi-pass membrane protein</topology>
    </subcellularLocation>
</comment>
<comment type="RNA editing">
    <location>
        <position position="35" evidence="2 3"/>
    </location>
    <location>
        <position position="89" evidence="2 3"/>
    </location>
    <location>
        <position position="103" evidence="2 3"/>
    </location>
    <location>
        <position position="147" evidence="2 3"/>
    </location>
    <location>
        <position position="159" evidence="2 3"/>
    </location>
    <location>
        <position position="160" evidence="2 3"/>
    </location>
    <location>
        <position position="167" evidence="2 3"/>
    </location>
    <location>
        <position position="168" evidence="2 3"/>
    </location>
    <location>
        <position position="175" evidence="2 3"/>
    </location>
    <location>
        <position position="182" evidence="2 3"/>
    </location>
    <location>
        <position position="213" evidence="2 3"/>
    </location>
    <location>
        <position position="231" evidence="2 3"/>
    </location>
    <location>
        <position position="241" evidence="2 3"/>
    </location>
    <location>
        <position position="321" evidence="2 3"/>
    </location>
    <location>
        <position position="356" evidence="2 3"/>
    </location>
    <location>
        <position position="357" evidence="2 3"/>
    </location>
    <text>The nonsense codon at position 168 is modified to a sense codon.</text>
</comment>
<comment type="similarity">
    <text evidence="1">Belongs to the complex I subunit 1 family.</text>
</comment>
<geneLocation type="chloroplast"/>
<sequence length="366" mass="40514">MVFNMNLKEQAMSLFYESGFPKDFFSFLWITASILILVSGVVIGVLVIVWLERKISAGIQQRIGPEYAGPLGIIQALADGTKLLLKEDIIPSRGDALLFSIGPAIVVIPVLLSYLVIPFGHNIILADLNIGVFFWIAVSSIAPLGLFMAGYGSNNKYSFLGGLRAVAQAISYEIPLALCVLSISLLSNSLSTVDIVEIQSKFGFWGWNVWRQPIGFIAFLIASLAECERLPFDLPEAEEELVAGYQTEYSGIKFGLFYVASYLNLLVSSLFVTVLYLGGWNLSIPFLPNFPYLEWKFTAETSEVINVIIGIIITLAKAYSFLFISIVTRWTLPRVRMDQLLNLGWKFLLPIALGNLLLTASFQLIA</sequence>
<feature type="chain" id="PRO_0000117505" description="NAD(P)H-quinone oxidoreductase subunit 1, chloroplastic">
    <location>
        <begin position="1"/>
        <end position="366"/>
    </location>
</feature>
<feature type="transmembrane region" description="Helical" evidence="1">
    <location>
        <begin position="29"/>
        <end position="49"/>
    </location>
</feature>
<feature type="transmembrane region" description="Helical" evidence="1">
    <location>
        <begin position="97"/>
        <end position="117"/>
    </location>
</feature>
<feature type="transmembrane region" description="Helical" evidence="1">
    <location>
        <begin position="130"/>
        <end position="150"/>
    </location>
</feature>
<feature type="transmembrane region" description="Helical" evidence="1">
    <location>
        <begin position="166"/>
        <end position="186"/>
    </location>
</feature>
<feature type="transmembrane region" description="Helical" evidence="1">
    <location>
        <begin position="202"/>
        <end position="222"/>
    </location>
</feature>
<feature type="transmembrane region" description="Helical" evidence="1">
    <location>
        <begin position="254"/>
        <end position="274"/>
    </location>
</feature>
<feature type="transmembrane region" description="Helical" evidence="1">
    <location>
        <begin position="307"/>
        <end position="327"/>
    </location>
</feature>
<feature type="transmembrane region" description="Helical" evidence="1">
    <location>
        <begin position="340"/>
        <end position="360"/>
    </location>
</feature>
<accession>Q85BI5</accession>
<keyword id="KW-0150">Chloroplast</keyword>
<keyword id="KW-0472">Membrane</keyword>
<keyword id="KW-0520">NAD</keyword>
<keyword id="KW-0521">NADP</keyword>
<keyword id="KW-0934">Plastid</keyword>
<keyword id="KW-0618">Plastoquinone</keyword>
<keyword id="KW-0874">Quinone</keyword>
<keyword id="KW-0691">RNA editing</keyword>
<keyword id="KW-0793">Thylakoid</keyword>
<keyword id="KW-1278">Translocase</keyword>
<keyword id="KW-0812">Transmembrane</keyword>
<keyword id="KW-1133">Transmembrane helix</keyword>
<evidence type="ECO:0000255" key="1">
    <source>
        <dbReference type="HAMAP-Rule" id="MF_01350"/>
    </source>
</evidence>
<evidence type="ECO:0000269" key="2">
    <source>
    </source>
</evidence>
<evidence type="ECO:0000269" key="3">
    <source>
    </source>
</evidence>